<protein>
    <recommendedName>
        <fullName evidence="1">Transcription termination/antitermination protein NusA</fullName>
    </recommendedName>
</protein>
<comment type="function">
    <text evidence="1">Participates in both transcription termination and antitermination.</text>
</comment>
<comment type="subunit">
    <text evidence="1">Monomer. Binds directly to the core enzyme of the DNA-dependent RNA polymerase and to nascent RNA.</text>
</comment>
<comment type="subcellular location">
    <subcellularLocation>
        <location evidence="1">Cytoplasm</location>
    </subcellularLocation>
</comment>
<comment type="similarity">
    <text evidence="1">Belongs to the NusA family.</text>
</comment>
<feature type="chain" id="PRO_0000181968" description="Transcription termination/antitermination protein NusA">
    <location>
        <begin position="1"/>
        <end position="495"/>
    </location>
</feature>
<feature type="domain" description="S1 motif" evidence="1">
    <location>
        <begin position="135"/>
        <end position="200"/>
    </location>
</feature>
<feature type="domain" description="KH" evidence="1">
    <location>
        <begin position="302"/>
        <end position="374"/>
    </location>
</feature>
<organism>
    <name type="scientific">Haemophilus influenzae (strain ATCC 51907 / DSM 11121 / KW20 / Rd)</name>
    <dbReference type="NCBI Taxonomy" id="71421"/>
    <lineage>
        <taxon>Bacteria</taxon>
        <taxon>Pseudomonadati</taxon>
        <taxon>Pseudomonadota</taxon>
        <taxon>Gammaproteobacteria</taxon>
        <taxon>Pasteurellales</taxon>
        <taxon>Pasteurellaceae</taxon>
        <taxon>Haemophilus</taxon>
    </lineage>
</organism>
<dbReference type="EMBL" id="L42023">
    <property type="protein sequence ID" value="AAC22932.1"/>
    <property type="molecule type" value="Genomic_DNA"/>
</dbReference>
<dbReference type="RefSeq" id="NP_439435.1">
    <property type="nucleotide sequence ID" value="NC_000907.1"/>
</dbReference>
<dbReference type="SMR" id="P43915"/>
<dbReference type="STRING" id="71421.HI_1283"/>
<dbReference type="EnsemblBacteria" id="AAC22932">
    <property type="protein sequence ID" value="AAC22932"/>
    <property type="gene ID" value="HI_1283"/>
</dbReference>
<dbReference type="KEGG" id="hin:HI_1283"/>
<dbReference type="PATRIC" id="fig|71421.8.peg.1335"/>
<dbReference type="eggNOG" id="COG0195">
    <property type="taxonomic scope" value="Bacteria"/>
</dbReference>
<dbReference type="HOGENOM" id="CLU_029242_0_0_6"/>
<dbReference type="OrthoDB" id="9807233at2"/>
<dbReference type="PhylomeDB" id="P43915"/>
<dbReference type="BioCyc" id="HINF71421:G1GJ1-1309-MONOMER"/>
<dbReference type="Proteomes" id="UP000000579">
    <property type="component" value="Chromosome"/>
</dbReference>
<dbReference type="GO" id="GO:0005829">
    <property type="term" value="C:cytosol"/>
    <property type="evidence" value="ECO:0000318"/>
    <property type="project" value="GO_Central"/>
</dbReference>
<dbReference type="GO" id="GO:0003700">
    <property type="term" value="F:DNA-binding transcription factor activity"/>
    <property type="evidence" value="ECO:0007669"/>
    <property type="project" value="InterPro"/>
</dbReference>
<dbReference type="GO" id="GO:0000166">
    <property type="term" value="F:nucleotide binding"/>
    <property type="evidence" value="ECO:0007669"/>
    <property type="project" value="InterPro"/>
</dbReference>
<dbReference type="GO" id="GO:0003723">
    <property type="term" value="F:RNA binding"/>
    <property type="evidence" value="ECO:0007669"/>
    <property type="project" value="UniProtKB-UniRule"/>
</dbReference>
<dbReference type="GO" id="GO:0006353">
    <property type="term" value="P:DNA-templated transcription termination"/>
    <property type="evidence" value="ECO:0007669"/>
    <property type="project" value="UniProtKB-UniRule"/>
</dbReference>
<dbReference type="GO" id="GO:0031564">
    <property type="term" value="P:transcription antitermination"/>
    <property type="evidence" value="ECO:0000318"/>
    <property type="project" value="GO_Central"/>
</dbReference>
<dbReference type="CDD" id="cd02134">
    <property type="entry name" value="KH-II_NusA_rpt1"/>
    <property type="match status" value="1"/>
</dbReference>
<dbReference type="CDD" id="cd22529">
    <property type="entry name" value="KH-II_NusA_rpt2"/>
    <property type="match status" value="1"/>
</dbReference>
<dbReference type="CDD" id="cd04455">
    <property type="entry name" value="S1_NusA"/>
    <property type="match status" value="1"/>
</dbReference>
<dbReference type="FunFam" id="1.10.150.20:FF:000015">
    <property type="entry name" value="Transcription termination/antitermination protein NusA"/>
    <property type="match status" value="1"/>
</dbReference>
<dbReference type="FunFam" id="1.10.150.20:FF:000018">
    <property type="entry name" value="Transcription termination/antitermination protein NusA"/>
    <property type="match status" value="1"/>
</dbReference>
<dbReference type="FunFam" id="3.30.1480.10:FF:000001">
    <property type="entry name" value="Transcription termination/antitermination protein NusA"/>
    <property type="match status" value="1"/>
</dbReference>
<dbReference type="FunFam" id="3.30.300.20:FF:000002">
    <property type="entry name" value="Transcription termination/antitermination protein NusA"/>
    <property type="match status" value="1"/>
</dbReference>
<dbReference type="FunFam" id="3.30.300.20:FF:000005">
    <property type="entry name" value="Transcription termination/antitermination protein NusA"/>
    <property type="match status" value="1"/>
</dbReference>
<dbReference type="Gene3D" id="3.30.300.20">
    <property type="match status" value="2"/>
</dbReference>
<dbReference type="Gene3D" id="1.10.150.20">
    <property type="entry name" value="5' to 3' exonuclease, C-terminal subdomain"/>
    <property type="match status" value="2"/>
</dbReference>
<dbReference type="Gene3D" id="2.40.50.140">
    <property type="entry name" value="Nucleic acid-binding proteins"/>
    <property type="match status" value="1"/>
</dbReference>
<dbReference type="Gene3D" id="3.30.1480.10">
    <property type="entry name" value="NusA, N-terminal domain"/>
    <property type="match status" value="1"/>
</dbReference>
<dbReference type="HAMAP" id="MF_00945_B">
    <property type="entry name" value="NusA_B"/>
    <property type="match status" value="1"/>
</dbReference>
<dbReference type="InterPro" id="IPR010995">
    <property type="entry name" value="DNA_repair_Rad51/TF_NusA_a-hlx"/>
</dbReference>
<dbReference type="InterPro" id="IPR004087">
    <property type="entry name" value="KH_dom"/>
</dbReference>
<dbReference type="InterPro" id="IPR015946">
    <property type="entry name" value="KH_dom-like_a/b"/>
</dbReference>
<dbReference type="InterPro" id="IPR025249">
    <property type="entry name" value="KH_dom_NusA-like"/>
</dbReference>
<dbReference type="InterPro" id="IPR009019">
    <property type="entry name" value="KH_sf_prok-type"/>
</dbReference>
<dbReference type="InterPro" id="IPR012340">
    <property type="entry name" value="NA-bd_OB-fold"/>
</dbReference>
<dbReference type="InterPro" id="IPR030842">
    <property type="entry name" value="NusA_bac"/>
</dbReference>
<dbReference type="InterPro" id="IPR036555">
    <property type="entry name" value="NusA_N_sf"/>
</dbReference>
<dbReference type="InterPro" id="IPR003029">
    <property type="entry name" value="S1_domain"/>
</dbReference>
<dbReference type="InterPro" id="IPR013735">
    <property type="entry name" value="TF_NusA_N"/>
</dbReference>
<dbReference type="InterPro" id="IPR010214">
    <property type="entry name" value="Tscrpt_termin_fac_NusA_C_rpt"/>
</dbReference>
<dbReference type="InterPro" id="IPR010213">
    <property type="entry name" value="Tscrpt_termination_fac_NusA"/>
</dbReference>
<dbReference type="NCBIfam" id="TIGR01953">
    <property type="entry name" value="NusA"/>
    <property type="match status" value="1"/>
</dbReference>
<dbReference type="NCBIfam" id="TIGR01954">
    <property type="entry name" value="nusA_Cterm_rpt"/>
    <property type="match status" value="2"/>
</dbReference>
<dbReference type="PANTHER" id="PTHR22648">
    <property type="entry name" value="TRANSCRIPTION TERMINATION FACTOR NUSA"/>
    <property type="match status" value="1"/>
</dbReference>
<dbReference type="PANTHER" id="PTHR22648:SF0">
    <property type="entry name" value="TRANSCRIPTION TERMINATION_ANTITERMINATION PROTEIN NUSA"/>
    <property type="match status" value="1"/>
</dbReference>
<dbReference type="Pfam" id="PF14520">
    <property type="entry name" value="HHH_5"/>
    <property type="match status" value="1"/>
</dbReference>
<dbReference type="Pfam" id="PF13184">
    <property type="entry name" value="KH_5"/>
    <property type="match status" value="1"/>
</dbReference>
<dbReference type="Pfam" id="PF08529">
    <property type="entry name" value="NusA_N"/>
    <property type="match status" value="1"/>
</dbReference>
<dbReference type="Pfam" id="PF00575">
    <property type="entry name" value="S1"/>
    <property type="match status" value="1"/>
</dbReference>
<dbReference type="SMART" id="SM00322">
    <property type="entry name" value="KH"/>
    <property type="match status" value="2"/>
</dbReference>
<dbReference type="SMART" id="SM00316">
    <property type="entry name" value="S1"/>
    <property type="match status" value="1"/>
</dbReference>
<dbReference type="SUPFAM" id="SSF50249">
    <property type="entry name" value="Nucleic acid-binding proteins"/>
    <property type="match status" value="1"/>
</dbReference>
<dbReference type="SUPFAM" id="SSF54814">
    <property type="entry name" value="Prokaryotic type KH domain (KH-domain type II)"/>
    <property type="match status" value="2"/>
</dbReference>
<dbReference type="SUPFAM" id="SSF47794">
    <property type="entry name" value="Rad51 N-terminal domain-like"/>
    <property type="match status" value="2"/>
</dbReference>
<dbReference type="SUPFAM" id="SSF69705">
    <property type="entry name" value="Transcription factor NusA, N-terminal domain"/>
    <property type="match status" value="1"/>
</dbReference>
<dbReference type="PROSITE" id="PS50084">
    <property type="entry name" value="KH_TYPE_1"/>
    <property type="match status" value="1"/>
</dbReference>
<dbReference type="PROSITE" id="PS50126">
    <property type="entry name" value="S1"/>
    <property type="match status" value="1"/>
</dbReference>
<evidence type="ECO:0000255" key="1">
    <source>
        <dbReference type="HAMAP-Rule" id="MF_00945"/>
    </source>
</evidence>
<name>NUSA_HAEIN</name>
<accession>P43915</accession>
<reference key="1">
    <citation type="journal article" date="1995" name="Science">
        <title>Whole-genome random sequencing and assembly of Haemophilus influenzae Rd.</title>
        <authorList>
            <person name="Fleischmann R.D."/>
            <person name="Adams M.D."/>
            <person name="White O."/>
            <person name="Clayton R.A."/>
            <person name="Kirkness E.F."/>
            <person name="Kerlavage A.R."/>
            <person name="Bult C.J."/>
            <person name="Tomb J.-F."/>
            <person name="Dougherty B.A."/>
            <person name="Merrick J.M."/>
            <person name="McKenney K."/>
            <person name="Sutton G.G."/>
            <person name="FitzHugh W."/>
            <person name="Fields C.A."/>
            <person name="Gocayne J.D."/>
            <person name="Scott J.D."/>
            <person name="Shirley R."/>
            <person name="Liu L.-I."/>
            <person name="Glodek A."/>
            <person name="Kelley J.M."/>
            <person name="Weidman J.F."/>
            <person name="Phillips C.A."/>
            <person name="Spriggs T."/>
            <person name="Hedblom E."/>
            <person name="Cotton M.D."/>
            <person name="Utterback T.R."/>
            <person name="Hanna M.C."/>
            <person name="Nguyen D.T."/>
            <person name="Saudek D.M."/>
            <person name="Brandon R.C."/>
            <person name="Fine L.D."/>
            <person name="Fritchman J.L."/>
            <person name="Fuhrmann J.L."/>
            <person name="Geoghagen N.S.M."/>
            <person name="Gnehm C.L."/>
            <person name="McDonald L.A."/>
            <person name="Small K.V."/>
            <person name="Fraser C.M."/>
            <person name="Smith H.O."/>
            <person name="Venter J.C."/>
        </authorList>
    </citation>
    <scope>NUCLEOTIDE SEQUENCE [LARGE SCALE GENOMIC DNA]</scope>
    <source>
        <strain>ATCC 51907 / DSM 11121 / KW20 / Rd</strain>
    </source>
</reference>
<gene>
    <name evidence="1" type="primary">nusA</name>
    <name type="ordered locus">HI_1283</name>
</gene>
<proteinExistence type="inferred from homology"/>
<sequence length="495" mass="55263">MSKEILLAAEAVSNEKLLPREKIFEALESAIAISTKKKFEYETDIRVSINPKTGEFDTFRRWLVVDEVKVPTKEITLEAAQFDDPNLQLGEYVEDQIESIAFDRIAMQTARQVISTKIREAERAKVVEQFREEEGKIVTGTVKKVSRDSIILDLGNKAEAMIAREDMLPRENFRPGDRVRGVLYKVNPEGKTAQLFVTRSKPEMLIELFRIEVPEIGEEMIEIRGAARDAGSRAKIAVKSNDKRIDPVGACVGMRGARVQVITNELGGERVDIVLWDDNPAQFVINAMAPADVSSIIVDEDNHSMDIAVEADNLAQAIGRNGQNVRLATQLTGWTLNVMTTDELNAKHQAEDNKVLNLFINALELDEEFAQILVEEGFTSLEEIAYVPMNELTAIDGLEDEDLVEELQTRAKNAITAAAVAEEEALKKANVEDRLLNLEGMNRHVAIKLAEKQITTLEELAEQGVDDLTDIEELTAEQAADLIMAARNICWFGEE</sequence>
<keyword id="KW-0963">Cytoplasm</keyword>
<keyword id="KW-1185">Reference proteome</keyword>
<keyword id="KW-0694">RNA-binding</keyword>
<keyword id="KW-0804">Transcription</keyword>
<keyword id="KW-0889">Transcription antitermination</keyword>
<keyword id="KW-0805">Transcription regulation</keyword>
<keyword id="KW-0806">Transcription termination</keyword>